<evidence type="ECO:0000250" key="1"/>
<evidence type="ECO:0000250" key="2">
    <source>
        <dbReference type="UniProtKB" id="P00157"/>
    </source>
</evidence>
<evidence type="ECO:0000255" key="3">
    <source>
        <dbReference type="PROSITE-ProRule" id="PRU00967"/>
    </source>
</evidence>
<evidence type="ECO:0000255" key="4">
    <source>
        <dbReference type="PROSITE-ProRule" id="PRU00968"/>
    </source>
</evidence>
<name>CYB_ICTST</name>
<geneLocation type="mitochondrion"/>
<keyword id="KW-0249">Electron transport</keyword>
<keyword id="KW-0349">Heme</keyword>
<keyword id="KW-0408">Iron</keyword>
<keyword id="KW-0472">Membrane</keyword>
<keyword id="KW-0479">Metal-binding</keyword>
<keyword id="KW-0496">Mitochondrion</keyword>
<keyword id="KW-0999">Mitochondrion inner membrane</keyword>
<keyword id="KW-0679">Respiratory chain</keyword>
<keyword id="KW-0812">Transmembrane</keyword>
<keyword id="KW-1133">Transmembrane helix</keyword>
<keyword id="KW-0813">Transport</keyword>
<keyword id="KW-0830">Ubiquinone</keyword>
<dbReference type="EMBL" id="AF498156">
    <property type="protein sequence ID" value="AAP19702.1"/>
    <property type="molecule type" value="Genomic_DNA"/>
</dbReference>
<dbReference type="SMR" id="Q85IN6"/>
<dbReference type="GO" id="GO:0005743">
    <property type="term" value="C:mitochondrial inner membrane"/>
    <property type="evidence" value="ECO:0007669"/>
    <property type="project" value="UniProtKB-SubCell"/>
</dbReference>
<dbReference type="GO" id="GO:0045275">
    <property type="term" value="C:respiratory chain complex III"/>
    <property type="evidence" value="ECO:0007669"/>
    <property type="project" value="InterPro"/>
</dbReference>
<dbReference type="GO" id="GO:0046872">
    <property type="term" value="F:metal ion binding"/>
    <property type="evidence" value="ECO:0007669"/>
    <property type="project" value="UniProtKB-KW"/>
</dbReference>
<dbReference type="GO" id="GO:0008121">
    <property type="term" value="F:ubiquinol-cytochrome-c reductase activity"/>
    <property type="evidence" value="ECO:0007669"/>
    <property type="project" value="InterPro"/>
</dbReference>
<dbReference type="GO" id="GO:0006122">
    <property type="term" value="P:mitochondrial electron transport, ubiquinol to cytochrome c"/>
    <property type="evidence" value="ECO:0007669"/>
    <property type="project" value="TreeGrafter"/>
</dbReference>
<dbReference type="CDD" id="cd00290">
    <property type="entry name" value="cytochrome_b_C"/>
    <property type="match status" value="1"/>
</dbReference>
<dbReference type="CDD" id="cd00284">
    <property type="entry name" value="Cytochrome_b_N"/>
    <property type="match status" value="1"/>
</dbReference>
<dbReference type="FunFam" id="1.20.810.10:FF:000002">
    <property type="entry name" value="Cytochrome b"/>
    <property type="match status" value="1"/>
</dbReference>
<dbReference type="Gene3D" id="1.20.810.10">
    <property type="entry name" value="Cytochrome Bc1 Complex, Chain C"/>
    <property type="match status" value="1"/>
</dbReference>
<dbReference type="InterPro" id="IPR005798">
    <property type="entry name" value="Cyt_b/b6_C"/>
</dbReference>
<dbReference type="InterPro" id="IPR036150">
    <property type="entry name" value="Cyt_b/b6_C_sf"/>
</dbReference>
<dbReference type="InterPro" id="IPR005797">
    <property type="entry name" value="Cyt_b/b6_N"/>
</dbReference>
<dbReference type="InterPro" id="IPR027387">
    <property type="entry name" value="Cytb/b6-like_sf"/>
</dbReference>
<dbReference type="InterPro" id="IPR030689">
    <property type="entry name" value="Cytochrome_b"/>
</dbReference>
<dbReference type="InterPro" id="IPR048260">
    <property type="entry name" value="Cytochrome_b_C_euk/bac"/>
</dbReference>
<dbReference type="InterPro" id="IPR048259">
    <property type="entry name" value="Cytochrome_b_N_euk/bac"/>
</dbReference>
<dbReference type="InterPro" id="IPR016174">
    <property type="entry name" value="Di-haem_cyt_TM"/>
</dbReference>
<dbReference type="PANTHER" id="PTHR19271">
    <property type="entry name" value="CYTOCHROME B"/>
    <property type="match status" value="1"/>
</dbReference>
<dbReference type="PANTHER" id="PTHR19271:SF16">
    <property type="entry name" value="CYTOCHROME B"/>
    <property type="match status" value="1"/>
</dbReference>
<dbReference type="Pfam" id="PF00032">
    <property type="entry name" value="Cytochrom_B_C"/>
    <property type="match status" value="1"/>
</dbReference>
<dbReference type="Pfam" id="PF00033">
    <property type="entry name" value="Cytochrome_B"/>
    <property type="match status" value="1"/>
</dbReference>
<dbReference type="PIRSF" id="PIRSF038885">
    <property type="entry name" value="COB"/>
    <property type="match status" value="1"/>
</dbReference>
<dbReference type="SUPFAM" id="SSF81648">
    <property type="entry name" value="a domain/subunit of cytochrome bc1 complex (Ubiquinol-cytochrome c reductase)"/>
    <property type="match status" value="1"/>
</dbReference>
<dbReference type="SUPFAM" id="SSF81342">
    <property type="entry name" value="Transmembrane di-heme cytochromes"/>
    <property type="match status" value="1"/>
</dbReference>
<dbReference type="PROSITE" id="PS51003">
    <property type="entry name" value="CYTB_CTER"/>
    <property type="match status" value="1"/>
</dbReference>
<dbReference type="PROSITE" id="PS51002">
    <property type="entry name" value="CYTB_NTER"/>
    <property type="match status" value="1"/>
</dbReference>
<sequence length="379" mass="42665">MTNIRKTHPLTKIINNSFIDLPAPSNISAWWNFGSLLGICLILQILTGLFLAMHYTSDTTTAFSSVTHICRDVNYGWIIRYMHANGASMFFICLFLHVGRGLYYGSYMFPETWNIGIILLFTVMATAFMGYVLPWGQMSFWGATVITNLLSAIPYIGTDLVEWIWGGFSVDKATLTRFFAFHFILPFIISALAAIHLLFLHETGSNNPSGIPSNSDKIPFHPYYTIKDILGALFLIITLMTLVLFSPDLLGDPDNYIPANPLNTPPHIKPEWYFLFAYAILRSIPNKLGGVLALVLSILVLAIIPLLHTSKQRSMMFRPLSQCLFWLLVADLLTLTWIGGQPVEYPFITIGQLASILYFTILLVLMPIISIAENNLLKW</sequence>
<accession>Q85IN6</accession>
<organism>
    <name type="scientific">Ictonyx striatus</name>
    <name type="common">Striped polecat</name>
    <dbReference type="NCBI Taxonomy" id="55050"/>
    <lineage>
        <taxon>Eukaryota</taxon>
        <taxon>Metazoa</taxon>
        <taxon>Chordata</taxon>
        <taxon>Craniata</taxon>
        <taxon>Vertebrata</taxon>
        <taxon>Euteleostomi</taxon>
        <taxon>Mammalia</taxon>
        <taxon>Eutheria</taxon>
        <taxon>Laurasiatheria</taxon>
        <taxon>Carnivora</taxon>
        <taxon>Caniformia</taxon>
        <taxon>Musteloidea</taxon>
        <taxon>Mustelidae</taxon>
        <taxon>Galictinae</taxon>
        <taxon>Ictonyx</taxon>
    </lineage>
</organism>
<comment type="function">
    <text evidence="2">Component of the ubiquinol-cytochrome c reductase complex (complex III or cytochrome b-c1 complex) that is part of the mitochondrial respiratory chain. The b-c1 complex mediates electron transfer from ubiquinol to cytochrome c. Contributes to the generation of a proton gradient across the mitochondrial membrane that is then used for ATP synthesis.</text>
</comment>
<comment type="cofactor">
    <cofactor evidence="2">
        <name>heme b</name>
        <dbReference type="ChEBI" id="CHEBI:60344"/>
    </cofactor>
    <text evidence="2">Binds 2 heme b groups non-covalently.</text>
</comment>
<comment type="subunit">
    <text evidence="2">The cytochrome bc1 complex contains 11 subunits: 3 respiratory subunits (MT-CYB, CYC1 and UQCRFS1), 2 core proteins (UQCRC1 and UQCRC2) and 6 low-molecular weight proteins (UQCRH/QCR6, UQCRB/QCR7, UQCRQ/QCR8, UQCR10/QCR9, UQCR11/QCR10 and a cleavage product of UQCRFS1). This cytochrome bc1 complex then forms a dimer.</text>
</comment>
<comment type="subcellular location">
    <subcellularLocation>
        <location evidence="2">Mitochondrion inner membrane</location>
        <topology evidence="2">Multi-pass membrane protein</topology>
    </subcellularLocation>
</comment>
<comment type="miscellaneous">
    <text evidence="1">Heme 1 (or BL or b562) is low-potential and absorbs at about 562 nm, and heme 2 (or BH or b566) is high-potential and absorbs at about 566 nm.</text>
</comment>
<comment type="similarity">
    <text evidence="3 4">Belongs to the cytochrome b family.</text>
</comment>
<comment type="caution">
    <text evidence="2">The full-length protein contains only eight transmembrane helices, not nine as predicted by bioinformatics tools.</text>
</comment>
<proteinExistence type="inferred from homology"/>
<reference key="1">
    <citation type="journal article" date="2003" name="Syst. Biol.">
        <title>Type I STS markers are more informative than cytochrome B in phylogenetic reconstruction of the Mustelidae (Mammalia: Carnivora).</title>
        <authorList>
            <person name="Koepfli K.-P."/>
            <person name="Wayne R.K."/>
        </authorList>
    </citation>
    <scope>NUCLEOTIDE SEQUENCE [GENOMIC DNA]</scope>
</reference>
<feature type="chain" id="PRO_0000061059" description="Cytochrome b">
    <location>
        <begin position="1"/>
        <end position="379"/>
    </location>
</feature>
<feature type="transmembrane region" description="Helical" evidence="2">
    <location>
        <begin position="33"/>
        <end position="53"/>
    </location>
</feature>
<feature type="transmembrane region" description="Helical" evidence="2">
    <location>
        <begin position="77"/>
        <end position="98"/>
    </location>
</feature>
<feature type="transmembrane region" description="Helical" evidence="2">
    <location>
        <begin position="113"/>
        <end position="133"/>
    </location>
</feature>
<feature type="transmembrane region" description="Helical" evidence="2">
    <location>
        <begin position="178"/>
        <end position="198"/>
    </location>
</feature>
<feature type="transmembrane region" description="Helical" evidence="2">
    <location>
        <begin position="226"/>
        <end position="246"/>
    </location>
</feature>
<feature type="transmembrane region" description="Helical" evidence="2">
    <location>
        <begin position="288"/>
        <end position="308"/>
    </location>
</feature>
<feature type="transmembrane region" description="Helical" evidence="2">
    <location>
        <begin position="320"/>
        <end position="340"/>
    </location>
</feature>
<feature type="transmembrane region" description="Helical" evidence="2">
    <location>
        <begin position="347"/>
        <end position="367"/>
    </location>
</feature>
<feature type="binding site" description="axial binding residue" evidence="2">
    <location>
        <position position="83"/>
    </location>
    <ligand>
        <name>heme b</name>
        <dbReference type="ChEBI" id="CHEBI:60344"/>
        <label>b562</label>
    </ligand>
    <ligandPart>
        <name>Fe</name>
        <dbReference type="ChEBI" id="CHEBI:18248"/>
    </ligandPart>
</feature>
<feature type="binding site" description="axial binding residue" evidence="2">
    <location>
        <position position="97"/>
    </location>
    <ligand>
        <name>heme b</name>
        <dbReference type="ChEBI" id="CHEBI:60344"/>
        <label>b566</label>
    </ligand>
    <ligandPart>
        <name>Fe</name>
        <dbReference type="ChEBI" id="CHEBI:18248"/>
    </ligandPart>
</feature>
<feature type="binding site" description="axial binding residue" evidence="2">
    <location>
        <position position="182"/>
    </location>
    <ligand>
        <name>heme b</name>
        <dbReference type="ChEBI" id="CHEBI:60344"/>
        <label>b562</label>
    </ligand>
    <ligandPart>
        <name>Fe</name>
        <dbReference type="ChEBI" id="CHEBI:18248"/>
    </ligandPart>
</feature>
<feature type="binding site" description="axial binding residue" evidence="2">
    <location>
        <position position="196"/>
    </location>
    <ligand>
        <name>heme b</name>
        <dbReference type="ChEBI" id="CHEBI:60344"/>
        <label>b566</label>
    </ligand>
    <ligandPart>
        <name>Fe</name>
        <dbReference type="ChEBI" id="CHEBI:18248"/>
    </ligandPart>
</feature>
<feature type="binding site" evidence="2">
    <location>
        <position position="201"/>
    </location>
    <ligand>
        <name>a ubiquinone</name>
        <dbReference type="ChEBI" id="CHEBI:16389"/>
    </ligand>
</feature>
<gene>
    <name type="primary">MT-CYB</name>
    <name type="synonym">COB</name>
    <name type="synonym">CYTB</name>
    <name type="synonym">MTCYB</name>
</gene>
<protein>
    <recommendedName>
        <fullName>Cytochrome b</fullName>
    </recommendedName>
    <alternativeName>
        <fullName>Complex III subunit 3</fullName>
    </alternativeName>
    <alternativeName>
        <fullName>Complex III subunit III</fullName>
    </alternativeName>
    <alternativeName>
        <fullName>Cytochrome b-c1 complex subunit 3</fullName>
    </alternativeName>
    <alternativeName>
        <fullName>Ubiquinol-cytochrome-c reductase complex cytochrome b subunit</fullName>
    </alternativeName>
</protein>